<comment type="function">
    <text evidence="1">Protein S19 forms a complex with S13 that binds strongly to the 16S ribosomal RNA.</text>
</comment>
<comment type="similarity">
    <text evidence="1">Belongs to the universal ribosomal protein uS19 family.</text>
</comment>
<protein>
    <recommendedName>
        <fullName evidence="1">Small ribosomal subunit protein uS19</fullName>
    </recommendedName>
    <alternativeName>
        <fullName evidence="2">30S ribosomal protein S19</fullName>
    </alternativeName>
</protein>
<gene>
    <name evidence="1" type="primary">rpsS</name>
    <name type="ordered locus">EFER_3299</name>
</gene>
<proteinExistence type="inferred from homology"/>
<dbReference type="EMBL" id="CU928158">
    <property type="protein sequence ID" value="CAQ90779.1"/>
    <property type="molecule type" value="Genomic_DNA"/>
</dbReference>
<dbReference type="RefSeq" id="WP_001138117.1">
    <property type="nucleotide sequence ID" value="NC_011740.1"/>
</dbReference>
<dbReference type="SMR" id="B7LRT2"/>
<dbReference type="GeneID" id="98390438"/>
<dbReference type="KEGG" id="efe:EFER_3299"/>
<dbReference type="HOGENOM" id="CLU_144911_0_1_6"/>
<dbReference type="OrthoDB" id="9797833at2"/>
<dbReference type="Proteomes" id="UP000000745">
    <property type="component" value="Chromosome"/>
</dbReference>
<dbReference type="GO" id="GO:0005737">
    <property type="term" value="C:cytoplasm"/>
    <property type="evidence" value="ECO:0007669"/>
    <property type="project" value="UniProtKB-ARBA"/>
</dbReference>
<dbReference type="GO" id="GO:0015935">
    <property type="term" value="C:small ribosomal subunit"/>
    <property type="evidence" value="ECO:0007669"/>
    <property type="project" value="InterPro"/>
</dbReference>
<dbReference type="GO" id="GO:0019843">
    <property type="term" value="F:rRNA binding"/>
    <property type="evidence" value="ECO:0007669"/>
    <property type="project" value="UniProtKB-UniRule"/>
</dbReference>
<dbReference type="GO" id="GO:0003735">
    <property type="term" value="F:structural constituent of ribosome"/>
    <property type="evidence" value="ECO:0007669"/>
    <property type="project" value="InterPro"/>
</dbReference>
<dbReference type="GO" id="GO:0000028">
    <property type="term" value="P:ribosomal small subunit assembly"/>
    <property type="evidence" value="ECO:0007669"/>
    <property type="project" value="TreeGrafter"/>
</dbReference>
<dbReference type="GO" id="GO:0006412">
    <property type="term" value="P:translation"/>
    <property type="evidence" value="ECO:0007669"/>
    <property type="project" value="UniProtKB-UniRule"/>
</dbReference>
<dbReference type="FunFam" id="3.30.860.10:FF:000001">
    <property type="entry name" value="30S ribosomal protein S19"/>
    <property type="match status" value="1"/>
</dbReference>
<dbReference type="Gene3D" id="3.30.860.10">
    <property type="entry name" value="30s Ribosomal Protein S19, Chain A"/>
    <property type="match status" value="1"/>
</dbReference>
<dbReference type="HAMAP" id="MF_00531">
    <property type="entry name" value="Ribosomal_uS19"/>
    <property type="match status" value="1"/>
</dbReference>
<dbReference type="InterPro" id="IPR002222">
    <property type="entry name" value="Ribosomal_uS19"/>
</dbReference>
<dbReference type="InterPro" id="IPR005732">
    <property type="entry name" value="Ribosomal_uS19_bac-type"/>
</dbReference>
<dbReference type="InterPro" id="IPR020934">
    <property type="entry name" value="Ribosomal_uS19_CS"/>
</dbReference>
<dbReference type="InterPro" id="IPR023575">
    <property type="entry name" value="Ribosomal_uS19_SF"/>
</dbReference>
<dbReference type="NCBIfam" id="TIGR01050">
    <property type="entry name" value="rpsS_bact"/>
    <property type="match status" value="1"/>
</dbReference>
<dbReference type="PANTHER" id="PTHR11880">
    <property type="entry name" value="RIBOSOMAL PROTEIN S19P FAMILY MEMBER"/>
    <property type="match status" value="1"/>
</dbReference>
<dbReference type="PANTHER" id="PTHR11880:SF8">
    <property type="entry name" value="SMALL RIBOSOMAL SUBUNIT PROTEIN US19M"/>
    <property type="match status" value="1"/>
</dbReference>
<dbReference type="Pfam" id="PF00203">
    <property type="entry name" value="Ribosomal_S19"/>
    <property type="match status" value="1"/>
</dbReference>
<dbReference type="PIRSF" id="PIRSF002144">
    <property type="entry name" value="Ribosomal_S19"/>
    <property type="match status" value="1"/>
</dbReference>
<dbReference type="PRINTS" id="PR00975">
    <property type="entry name" value="RIBOSOMALS19"/>
</dbReference>
<dbReference type="SUPFAM" id="SSF54570">
    <property type="entry name" value="Ribosomal protein S19"/>
    <property type="match status" value="1"/>
</dbReference>
<dbReference type="PROSITE" id="PS00323">
    <property type="entry name" value="RIBOSOMAL_S19"/>
    <property type="match status" value="1"/>
</dbReference>
<feature type="chain" id="PRO_1000127978" description="Small ribosomal subunit protein uS19">
    <location>
        <begin position="1"/>
        <end position="92"/>
    </location>
</feature>
<accession>B7LRT2</accession>
<reference key="1">
    <citation type="journal article" date="2009" name="PLoS Genet.">
        <title>Organised genome dynamics in the Escherichia coli species results in highly diverse adaptive paths.</title>
        <authorList>
            <person name="Touchon M."/>
            <person name="Hoede C."/>
            <person name="Tenaillon O."/>
            <person name="Barbe V."/>
            <person name="Baeriswyl S."/>
            <person name="Bidet P."/>
            <person name="Bingen E."/>
            <person name="Bonacorsi S."/>
            <person name="Bouchier C."/>
            <person name="Bouvet O."/>
            <person name="Calteau A."/>
            <person name="Chiapello H."/>
            <person name="Clermont O."/>
            <person name="Cruveiller S."/>
            <person name="Danchin A."/>
            <person name="Diard M."/>
            <person name="Dossat C."/>
            <person name="Karoui M.E."/>
            <person name="Frapy E."/>
            <person name="Garry L."/>
            <person name="Ghigo J.M."/>
            <person name="Gilles A.M."/>
            <person name="Johnson J."/>
            <person name="Le Bouguenec C."/>
            <person name="Lescat M."/>
            <person name="Mangenot S."/>
            <person name="Martinez-Jehanne V."/>
            <person name="Matic I."/>
            <person name="Nassif X."/>
            <person name="Oztas S."/>
            <person name="Petit M.A."/>
            <person name="Pichon C."/>
            <person name="Rouy Z."/>
            <person name="Ruf C.S."/>
            <person name="Schneider D."/>
            <person name="Tourret J."/>
            <person name="Vacherie B."/>
            <person name="Vallenet D."/>
            <person name="Medigue C."/>
            <person name="Rocha E.P.C."/>
            <person name="Denamur E."/>
        </authorList>
    </citation>
    <scope>NUCLEOTIDE SEQUENCE [LARGE SCALE GENOMIC DNA]</scope>
    <source>
        <strain>ATCC 35469 / DSM 13698 / BCRC 15582 / CCUG 18766 / IAM 14443 / JCM 21226 / LMG 7866 / NBRC 102419 / NCTC 12128 / CDC 0568-73</strain>
    </source>
</reference>
<organism>
    <name type="scientific">Escherichia fergusonii (strain ATCC 35469 / DSM 13698 / CCUG 18766 / IAM 14443 / JCM 21226 / LMG 7866 / NBRC 102419 / NCTC 12128 / CDC 0568-73)</name>
    <dbReference type="NCBI Taxonomy" id="585054"/>
    <lineage>
        <taxon>Bacteria</taxon>
        <taxon>Pseudomonadati</taxon>
        <taxon>Pseudomonadota</taxon>
        <taxon>Gammaproteobacteria</taxon>
        <taxon>Enterobacterales</taxon>
        <taxon>Enterobacteriaceae</taxon>
        <taxon>Escherichia</taxon>
    </lineage>
</organism>
<name>RS19_ESCF3</name>
<evidence type="ECO:0000255" key="1">
    <source>
        <dbReference type="HAMAP-Rule" id="MF_00531"/>
    </source>
</evidence>
<evidence type="ECO:0000305" key="2"/>
<keyword id="KW-0687">Ribonucleoprotein</keyword>
<keyword id="KW-0689">Ribosomal protein</keyword>
<keyword id="KW-0694">RNA-binding</keyword>
<keyword id="KW-0699">rRNA-binding</keyword>
<sequence length="92" mass="10430">MPRSLKKGPFIDLHLLKKVEKAVESGDKKPLRTWSRRSTIFPNMIGLTIAVHNGRQHVPVFVTDEMVGHKLGEFAPTRTYRGHAADKKAKKK</sequence>